<dbReference type="EMBL" id="U28375">
    <property type="protein sequence ID" value="AAA83061.1"/>
    <property type="molecule type" value="Genomic_DNA"/>
</dbReference>
<dbReference type="EMBL" id="U00096">
    <property type="protein sequence ID" value="AAC75918.1"/>
    <property type="molecule type" value="Genomic_DNA"/>
</dbReference>
<dbReference type="EMBL" id="AP009048">
    <property type="protein sequence ID" value="BAE76946.1"/>
    <property type="molecule type" value="Genomic_DNA"/>
</dbReference>
<dbReference type="PIR" id="H65071">
    <property type="entry name" value="H65071"/>
</dbReference>
<dbReference type="RefSeq" id="NP_417356.1">
    <property type="nucleotide sequence ID" value="NC_000913.3"/>
</dbReference>
<dbReference type="RefSeq" id="WP_000572462.1">
    <property type="nucleotide sequence ID" value="NZ_LN832404.1"/>
</dbReference>
<dbReference type="SMR" id="P64557"/>
<dbReference type="BioGRID" id="4262327">
    <property type="interactions" value="18"/>
</dbReference>
<dbReference type="DIP" id="DIP-48265N"/>
<dbReference type="FunCoup" id="P64557">
    <property type="interactions" value="38"/>
</dbReference>
<dbReference type="STRING" id="511145.b2880"/>
<dbReference type="PaxDb" id="511145-b2880"/>
<dbReference type="EnsemblBacteria" id="AAC75918">
    <property type="protein sequence ID" value="AAC75918"/>
    <property type="gene ID" value="b2880"/>
</dbReference>
<dbReference type="GeneID" id="949071"/>
<dbReference type="KEGG" id="ecj:JW2848"/>
<dbReference type="KEGG" id="eco:b2880"/>
<dbReference type="KEGG" id="ecoc:C3026_15795"/>
<dbReference type="PATRIC" id="fig|1411691.4.peg.3854"/>
<dbReference type="EchoBASE" id="EB2875"/>
<dbReference type="eggNOG" id="COG1319">
    <property type="taxonomic scope" value="Bacteria"/>
</dbReference>
<dbReference type="HOGENOM" id="CLU_1053145_0_0_6"/>
<dbReference type="InParanoid" id="P64557"/>
<dbReference type="OMA" id="GGCAFLK"/>
<dbReference type="OrthoDB" id="6198291at2"/>
<dbReference type="PhylomeDB" id="P64557"/>
<dbReference type="BioCyc" id="EcoCyc:G7499-MONOMER"/>
<dbReference type="PRO" id="PR:P64557"/>
<dbReference type="Proteomes" id="UP000000625">
    <property type="component" value="Chromosome"/>
</dbReference>
<dbReference type="GO" id="GO:0071949">
    <property type="term" value="F:FAD binding"/>
    <property type="evidence" value="ECO:0007669"/>
    <property type="project" value="InterPro"/>
</dbReference>
<dbReference type="GO" id="GO:0016491">
    <property type="term" value="F:oxidoreductase activity"/>
    <property type="evidence" value="ECO:0007669"/>
    <property type="project" value="InterPro"/>
</dbReference>
<dbReference type="Gene3D" id="3.30.465.10">
    <property type="match status" value="1"/>
</dbReference>
<dbReference type="Gene3D" id="3.30.390.50">
    <property type="entry name" value="CO dehydrogenase flavoprotein, C-terminal domain"/>
    <property type="match status" value="1"/>
</dbReference>
<dbReference type="InterPro" id="IPR005107">
    <property type="entry name" value="CO_DH_flav_C"/>
</dbReference>
<dbReference type="InterPro" id="IPR036683">
    <property type="entry name" value="CO_DH_flav_C_dom_sf"/>
</dbReference>
<dbReference type="InterPro" id="IPR051312">
    <property type="entry name" value="Diverse_Substr_Oxidored"/>
</dbReference>
<dbReference type="InterPro" id="IPR016166">
    <property type="entry name" value="FAD-bd_PCMH"/>
</dbReference>
<dbReference type="InterPro" id="IPR036318">
    <property type="entry name" value="FAD-bd_PCMH-like_sf"/>
</dbReference>
<dbReference type="InterPro" id="IPR016169">
    <property type="entry name" value="FAD-bd_PCMH_sub2"/>
</dbReference>
<dbReference type="InterPro" id="IPR017698">
    <property type="entry name" value="Molybdo-cont_Rdtase_FAD-bd_su"/>
</dbReference>
<dbReference type="InterPro" id="IPR002346">
    <property type="entry name" value="Mopterin_DH_FAD-bd"/>
</dbReference>
<dbReference type="NCBIfam" id="TIGR03312">
    <property type="entry name" value="Se_sel_red_FAD"/>
    <property type="match status" value="1"/>
</dbReference>
<dbReference type="PANTHER" id="PTHR42659:SF9">
    <property type="entry name" value="XANTHINE DEHYDROGENASE FAD-BINDING SUBUNIT XDHB-RELATED"/>
    <property type="match status" value="1"/>
</dbReference>
<dbReference type="PANTHER" id="PTHR42659">
    <property type="entry name" value="XANTHINE DEHYDROGENASE SUBUNIT C-RELATED"/>
    <property type="match status" value="1"/>
</dbReference>
<dbReference type="Pfam" id="PF00941">
    <property type="entry name" value="FAD_binding_5"/>
    <property type="match status" value="1"/>
</dbReference>
<dbReference type="SMART" id="SM01092">
    <property type="entry name" value="CO_deh_flav_C"/>
    <property type="match status" value="1"/>
</dbReference>
<dbReference type="SUPFAM" id="SSF55447">
    <property type="entry name" value="CO dehydrogenase flavoprotein C-terminal domain-like"/>
    <property type="match status" value="1"/>
</dbReference>
<dbReference type="SUPFAM" id="SSF56176">
    <property type="entry name" value="FAD-binding/transporter-associated domain-like"/>
    <property type="match status" value="1"/>
</dbReference>
<dbReference type="PROSITE" id="PS51387">
    <property type="entry name" value="FAD_PCMH"/>
    <property type="match status" value="1"/>
</dbReference>
<proteinExistence type="predicted"/>
<evidence type="ECO:0000255" key="1">
    <source>
        <dbReference type="PROSITE-ProRule" id="PRU00718"/>
    </source>
</evidence>
<sequence length="259" mass="28650">MIEQFFRPDSVEQALELKRRYQDEAVWFAGGSKLNATPTRTDKKIAISLQDLELDWVDWDNGALRIGAMSRLQPLRDARFIPAALREALGFVYSRHVRNQSTIGGEIAARQEESVLLPVLLALDAELVFGNGETLSIEDYLACPCDRLLTEIIIKDPYRTCATRKISRSQAGLTVVTAAVAMTDHDGMRIALDGVASKALRLHDVEKQNLEGNALEQAVANAIFPQEDLRGSVAYKRYITGVLVADLYADCQQAGEEAV</sequence>
<name>YGFM_ECOLI</name>
<reference key="1">
    <citation type="journal article" date="1997" name="Science">
        <title>The complete genome sequence of Escherichia coli K-12.</title>
        <authorList>
            <person name="Blattner F.R."/>
            <person name="Plunkett G. III"/>
            <person name="Bloch C.A."/>
            <person name="Perna N.T."/>
            <person name="Burland V."/>
            <person name="Riley M."/>
            <person name="Collado-Vides J."/>
            <person name="Glasner J.D."/>
            <person name="Rode C.K."/>
            <person name="Mayhew G.F."/>
            <person name="Gregor J."/>
            <person name="Davis N.W."/>
            <person name="Kirkpatrick H.A."/>
            <person name="Goeden M.A."/>
            <person name="Rose D.J."/>
            <person name="Mau B."/>
            <person name="Shao Y."/>
        </authorList>
    </citation>
    <scope>NUCLEOTIDE SEQUENCE [LARGE SCALE GENOMIC DNA]</scope>
    <source>
        <strain>K12 / MG1655 / ATCC 47076</strain>
    </source>
</reference>
<reference key="2">
    <citation type="journal article" date="2006" name="Mol. Syst. Biol.">
        <title>Highly accurate genome sequences of Escherichia coli K-12 strains MG1655 and W3110.</title>
        <authorList>
            <person name="Hayashi K."/>
            <person name="Morooka N."/>
            <person name="Yamamoto Y."/>
            <person name="Fujita K."/>
            <person name="Isono K."/>
            <person name="Choi S."/>
            <person name="Ohtsubo E."/>
            <person name="Baba T."/>
            <person name="Wanner B.L."/>
            <person name="Mori H."/>
            <person name="Horiuchi T."/>
        </authorList>
    </citation>
    <scope>NUCLEOTIDE SEQUENCE [LARGE SCALE GENOMIC DNA]</scope>
    <source>
        <strain>K12 / W3110 / ATCC 27325 / DSM 5911</strain>
    </source>
</reference>
<accession>P64557</accession>
<accession>Q2M9W0</accession>
<accession>Q46813</accession>
<protein>
    <recommendedName>
        <fullName>Uncharacterized protein YgfM</fullName>
    </recommendedName>
</protein>
<organism>
    <name type="scientific">Escherichia coli (strain K12)</name>
    <dbReference type="NCBI Taxonomy" id="83333"/>
    <lineage>
        <taxon>Bacteria</taxon>
        <taxon>Pseudomonadati</taxon>
        <taxon>Pseudomonadota</taxon>
        <taxon>Gammaproteobacteria</taxon>
        <taxon>Enterobacterales</taxon>
        <taxon>Enterobacteriaceae</taxon>
        <taxon>Escherichia</taxon>
    </lineage>
</organism>
<feature type="chain" id="PRO_0000169356" description="Uncharacterized protein YgfM">
    <location>
        <begin position="1"/>
        <end position="259"/>
    </location>
</feature>
<feature type="domain" description="FAD-binding PCMH-type" evidence="1">
    <location>
        <begin position="1"/>
        <end position="159"/>
    </location>
</feature>
<gene>
    <name type="primary">ygfM</name>
    <name type="ordered locus">b2880</name>
    <name type="ordered locus">JW2848</name>
</gene>
<keyword id="KW-1185">Reference proteome</keyword>